<organism>
    <name type="scientific">Homo sapiens</name>
    <name type="common">Human</name>
    <dbReference type="NCBI Taxonomy" id="9606"/>
    <lineage>
        <taxon>Eukaryota</taxon>
        <taxon>Metazoa</taxon>
        <taxon>Chordata</taxon>
        <taxon>Craniata</taxon>
        <taxon>Vertebrata</taxon>
        <taxon>Euteleostomi</taxon>
        <taxon>Mammalia</taxon>
        <taxon>Eutheria</taxon>
        <taxon>Euarchontoglires</taxon>
        <taxon>Primates</taxon>
        <taxon>Haplorrhini</taxon>
        <taxon>Catarrhini</taxon>
        <taxon>Hominidae</taxon>
        <taxon>Homo</taxon>
    </lineage>
</organism>
<proteinExistence type="evidence at protein level"/>
<comment type="function">
    <text evidence="1 3 4 5 10 11 12 21">Non-lysosomal glucosylceramidase that catalyzes the hydrolysis of glucosylceramides/GlcCers (such as beta-D-glucosyl-(1&lt;-&gt;1')-N-acylsphing-4-enine) to free glucose and ceramides (such as N-acylsphing-4-enine) (PubMed:17105727, PubMed:30308956, PubMed:32144204). GlcCers are membrane glycosphingolipids that have a wide intracellular distribution (By similarity). They are the main precursors of more complex glycosphingolipids that play a role in cellular growth, differentiation, adhesion, signaling, cytoskeletal dynamics and membrane properties (By similarity). Involved in the transglucosylation of cholesterol, transfers glucose from GlcCer to cholesterol, thereby modifying its water solubility and biological properties (PubMed:32144204). Under specific conditions, may catalyze the reverse reaction, transferring glucose from cholesteryl-3-beta-D-glucoside to ceramide (such as N-acylsphing-4-enine) (Probable). May play a role in the metabolism of bile acids (PubMed:11489889, PubMed:17080196, PubMed:9111029). Able to hydrolyze bile acid 3-O-glucosides as well as to produce bile acid-glucose conjugates thanks to a bile acid glucosyl transferase activity (PubMed:11489889, PubMed:17080196, PubMed:9111029). Catalyzes the hydrolysis of galactosylceramides/GalCers (such as beta-D-galactosyl-(1&lt;-&gt;1')-N-acylsphing-4-enine), as well as the galactosyl transfer between GalCers and cholesterol in vitro with lower activity compared with their activity against GlcCers (PubMed:32144204).</text>
</comment>
<comment type="catalytic activity">
    <reaction evidence="4">
        <text>a beta-D-glucosyl-(1&lt;-&gt;1')-N-acylsphing-4-enine + H2O = an N-acylsphing-4-enine + D-glucose</text>
        <dbReference type="Rhea" id="RHEA:13269"/>
        <dbReference type="ChEBI" id="CHEBI:4167"/>
        <dbReference type="ChEBI" id="CHEBI:15377"/>
        <dbReference type="ChEBI" id="CHEBI:22801"/>
        <dbReference type="ChEBI" id="CHEBI:52639"/>
        <dbReference type="EC" id="3.2.1.45"/>
    </reaction>
    <physiologicalReaction direction="left-to-right" evidence="4">
        <dbReference type="Rhea" id="RHEA:13270"/>
    </physiologicalReaction>
</comment>
<comment type="catalytic activity">
    <reaction evidence="11">
        <text>a beta-D-galactosyl-(1&lt;-&gt;1')-N-acylsphing-4-enine + H2O = an N-acylsphing-4-enine + D-galactose</text>
        <dbReference type="Rhea" id="RHEA:14297"/>
        <dbReference type="ChEBI" id="CHEBI:4139"/>
        <dbReference type="ChEBI" id="CHEBI:15377"/>
        <dbReference type="ChEBI" id="CHEBI:18390"/>
        <dbReference type="ChEBI" id="CHEBI:52639"/>
        <dbReference type="EC" id="3.2.1.46"/>
    </reaction>
    <physiologicalReaction direction="left-to-right" evidence="11">
        <dbReference type="Rhea" id="RHEA:14298"/>
    </physiologicalReaction>
</comment>
<comment type="catalytic activity">
    <reaction evidence="3 4 12">
        <text>beta-D-glucosyl-(1-&gt;3)-O-lithocholate + H2O = lithocholate + D-glucose</text>
        <dbReference type="Rhea" id="RHEA:58344"/>
        <dbReference type="ChEBI" id="CHEBI:4167"/>
        <dbReference type="ChEBI" id="CHEBI:15377"/>
        <dbReference type="ChEBI" id="CHEBI:29744"/>
        <dbReference type="ChEBI" id="CHEBI:142611"/>
    </reaction>
    <physiologicalReaction direction="left-to-right" evidence="18 19 22">
        <dbReference type="Rhea" id="RHEA:58345"/>
    </physiologicalReaction>
</comment>
<comment type="catalytic activity">
    <reaction evidence="12">
        <text>beta-D-glucosyl-(1-&gt;3)-O-chenodeoxycholate + H2O = chenodeoxycholate + D-glucose</text>
        <dbReference type="Rhea" id="RHEA:58340"/>
        <dbReference type="ChEBI" id="CHEBI:4167"/>
        <dbReference type="ChEBI" id="CHEBI:15377"/>
        <dbReference type="ChEBI" id="CHEBI:36234"/>
        <dbReference type="ChEBI" id="CHEBI:142610"/>
    </reaction>
    <physiologicalReaction direction="left-to-right" evidence="22">
        <dbReference type="Rhea" id="RHEA:58341"/>
    </physiologicalReaction>
</comment>
<comment type="catalytic activity">
    <reaction evidence="12">
        <text>a di-trans,poly-cis-dolichyl beta-D-glucosyl phosphate + chenodeoxycholate = beta-D-glucosyl-(1-&gt;3)-O-chenodeoxycholate + a di-trans,poly-cis-dolichyl phosphate + H(+)</text>
        <dbReference type="Rhea" id="RHEA:59104"/>
        <dbReference type="Rhea" id="RHEA-COMP:19498"/>
        <dbReference type="Rhea" id="RHEA-COMP:19502"/>
        <dbReference type="ChEBI" id="CHEBI:15378"/>
        <dbReference type="ChEBI" id="CHEBI:36234"/>
        <dbReference type="ChEBI" id="CHEBI:57525"/>
        <dbReference type="ChEBI" id="CHEBI:57683"/>
        <dbReference type="ChEBI" id="CHEBI:142610"/>
    </reaction>
    <physiologicalReaction direction="left-to-right" evidence="22">
        <dbReference type="Rhea" id="RHEA:59105"/>
    </physiologicalReaction>
</comment>
<comment type="catalytic activity">
    <reaction evidence="12">
        <text>octyl beta-D-glucose + chenodeoxycholate = beta-D-glucosyl-(1-&gt;3)-O-chenodeoxycholate + octan-1-ol</text>
        <dbReference type="Rhea" id="RHEA:59108"/>
        <dbReference type="ChEBI" id="CHEBI:16188"/>
        <dbReference type="ChEBI" id="CHEBI:36234"/>
        <dbReference type="ChEBI" id="CHEBI:41128"/>
        <dbReference type="ChEBI" id="CHEBI:142610"/>
    </reaction>
    <physiologicalReaction direction="left-to-right" evidence="22">
        <dbReference type="Rhea" id="RHEA:59109"/>
    </physiologicalReaction>
</comment>
<comment type="catalytic activity">
    <reaction evidence="11">
        <text>cholesteryl 3-beta-D-glucoside + H2O = cholesterol + D-glucose</text>
        <dbReference type="Rhea" id="RHEA:11956"/>
        <dbReference type="ChEBI" id="CHEBI:4167"/>
        <dbReference type="ChEBI" id="CHEBI:15377"/>
        <dbReference type="ChEBI" id="CHEBI:16113"/>
        <dbReference type="ChEBI" id="CHEBI:17495"/>
    </reaction>
    <physiologicalReaction direction="left-to-right" evidence="11">
        <dbReference type="Rhea" id="RHEA:11957"/>
    </physiologicalReaction>
</comment>
<comment type="catalytic activity">
    <reaction evidence="11">
        <text>a beta-D-glucosyl-(1&lt;-&gt;1')-N-acylsphing-4-enine + cholesterol = cholesteryl 3-beta-D-glucoside + an N-acylsphing-4-enine</text>
        <dbReference type="Rhea" id="RHEA:58264"/>
        <dbReference type="ChEBI" id="CHEBI:16113"/>
        <dbReference type="ChEBI" id="CHEBI:17495"/>
        <dbReference type="ChEBI" id="CHEBI:22801"/>
        <dbReference type="ChEBI" id="CHEBI:52639"/>
    </reaction>
    <physiologicalReaction direction="left-to-right" evidence="11">
        <dbReference type="Rhea" id="RHEA:58265"/>
    </physiologicalReaction>
    <physiologicalReaction direction="right-to-left" evidence="21">
        <dbReference type="Rhea" id="RHEA:58266"/>
    </physiologicalReaction>
</comment>
<comment type="catalytic activity">
    <reaction evidence="11">
        <text>beta-D-glucosyl-N-(9Z-octadecenoyl)-sphing-4E-enine + cholesterol = N-(9Z-octadecenoyl)-sphing-4-enine + cholesteryl 3-beta-D-glucoside</text>
        <dbReference type="Rhea" id="RHEA:58324"/>
        <dbReference type="ChEBI" id="CHEBI:16113"/>
        <dbReference type="ChEBI" id="CHEBI:17495"/>
        <dbReference type="ChEBI" id="CHEBI:77996"/>
        <dbReference type="ChEBI" id="CHEBI:139140"/>
    </reaction>
    <physiologicalReaction direction="left-to-right" evidence="11">
        <dbReference type="Rhea" id="RHEA:58325"/>
    </physiologicalReaction>
    <physiologicalReaction direction="right-to-left" evidence="21">
        <dbReference type="Rhea" id="RHEA:58326"/>
    </physiologicalReaction>
</comment>
<comment type="catalytic activity">
    <reaction evidence="11">
        <text>a beta-D-galactosyl-(1&lt;-&gt;1')-N-acylsphing-4-enine + cholesterol = cholesteryl 3-beta-D-galactoside + an N-acylsphing-4-enine</text>
        <dbReference type="Rhea" id="RHEA:70235"/>
        <dbReference type="ChEBI" id="CHEBI:16113"/>
        <dbReference type="ChEBI" id="CHEBI:18390"/>
        <dbReference type="ChEBI" id="CHEBI:52639"/>
        <dbReference type="ChEBI" id="CHEBI:189066"/>
    </reaction>
    <physiologicalReaction direction="left-to-right" evidence="11">
        <dbReference type="Rhea" id="RHEA:70236"/>
    </physiologicalReaction>
    <physiologicalReaction direction="right-to-left" evidence="21">
        <dbReference type="Rhea" id="RHEA:70237"/>
    </physiologicalReaction>
</comment>
<comment type="catalytic activity">
    <reaction evidence="11">
        <text>1-(beta-D-galactosyl)-N-dodecanoylsphing-4-enine + cholesterol = cholesteryl 3-beta-D-galactoside + N-dodecanoylsphing-4-enine</text>
        <dbReference type="Rhea" id="RHEA:70255"/>
        <dbReference type="ChEBI" id="CHEBI:16113"/>
        <dbReference type="ChEBI" id="CHEBI:72956"/>
        <dbReference type="ChEBI" id="CHEBI:73432"/>
        <dbReference type="ChEBI" id="CHEBI:189066"/>
    </reaction>
    <physiologicalReaction direction="left-to-right" evidence="11">
        <dbReference type="Rhea" id="RHEA:70256"/>
    </physiologicalReaction>
    <physiologicalReaction direction="right-to-left" evidence="21">
        <dbReference type="Rhea" id="RHEA:70257"/>
    </physiologicalReaction>
</comment>
<comment type="activity regulation">
    <text evidence="3 10">Inhibited by AMP-DMN/N -((5-adamantane-1-yl-methoxy)pentyl)-deoxynojirimycin (PubMed:11489889, PubMed:30308956). Activated by Mn(2+), Co(2+) and Mg(2+) and inhibited by Zn(2+) (PubMed:11489889). Enzymatic activity is dependent on membrane association and requires the presence of lipids (PubMed:11489889). The membrane-associated enzyme is not inhibited by condutiriol B epoxide and bromocondutiriol B epoxide (PubMed:11489889).</text>
</comment>
<comment type="biophysicochemical properties">
    <kinetics>
        <KM evidence="12">1.7 uM for beta-D-glucosyl-(1-&gt;3)-O-lithocholate</KM>
        <KM evidence="12">6.2 uM for beta-D-glucosyl-(1-&gt;3)-O-chenodeoxycholate</KM>
        <KM evidence="12">210 uM for 4-methylumbelliferyl beta-D-glucoside</KM>
        <text evidence="12">kcat is 2500 min(-1) for the hydrolysis of beta-D-glucosyl-(1-&gt;3)-O-lithocholate (PubMed:9111029). kcat is 1300 min(-1) for the hydrolysis of beta-D-glucosyl-(1-&gt;3)-O-chenodeoxycholate (PubMed:9111029). kcat is 4700 min(-1) for the hydrolysis of 4-methylumbelliferyl beta-D-glucoside (PubMed:9111029).</text>
    </kinetics>
    <phDependence>
        <text evidence="12">Optimum pH is 5.0 for the hydrolysis of bile acid glucosides.</text>
    </phDependence>
</comment>
<comment type="pathway">
    <text evidence="4 10 21">Lipid metabolism; sphingolipid metabolism.</text>
</comment>
<comment type="pathway">
    <text evidence="21">Steroid metabolism; cholesterol metabolism.</text>
</comment>
<comment type="subcellular location">
    <subcellularLocation>
        <location evidence="1">Endoplasmic reticulum membrane</location>
        <topology evidence="3">Peripheral membrane protein</topology>
        <orientation evidence="1">Cytoplasmic side</orientation>
    </subcellularLocation>
    <subcellularLocation>
        <location evidence="1">Golgi apparatus membrane</location>
        <topology evidence="3">Peripheral membrane protein</topology>
        <orientation evidence="1">Cytoplasmic side</orientation>
    </subcellularLocation>
    <text evidence="3 5">Localization to the plasma membrane and alternative topologies have also been reported.</text>
</comment>
<comment type="alternative products">
    <event type="alternative splicing"/>
    <isoform>
        <id>Q9HCG7-1</id>
        <name>1</name>
        <sequence type="displayed"/>
    </isoform>
    <isoform>
        <id>Q9HCG7-2</id>
        <name>2</name>
        <sequence type="described" ref="VSP_024384"/>
    </isoform>
    <isoform>
        <id>Q9HCG7-3</id>
        <name>3</name>
        <sequence type="described" ref="VSP_024383"/>
    </isoform>
</comment>
<comment type="tissue specificity">
    <text evidence="3">Widely expressed (PubMed:11489889). Mainly expressed in brain, heart, skeletal muscle, kidney and placenta and expressed at lower levels in liver, spleen, small intestine and lung (PubMed:11489889). Detectable in colon, thymus and peripheral blood leukocytes (PubMed:11489889).</text>
</comment>
<comment type="disease" evidence="6 7 8 9 10">
    <disease id="DI-03745">
        <name>Spastic paraplegia 46, autosomal recessive</name>
        <acronym>SPG46</acronym>
        <description>A neurodegenerative disorder characterized by onset in childhood of slowly progressive spastic paraplegia and cerebellar signs. Some patients have cognitive impairment, cataracts, and cerebral, cerebellar, and corpus callosum atrophy on brain imaging.</description>
        <dbReference type="MIM" id="614409"/>
    </disease>
    <text>The disease is caused by variants affecting the gene represented in this entry.</text>
</comment>
<comment type="similarity">
    <text evidence="17">Belongs to the non-lysosomal glucosylceramidase family.</text>
</comment>
<comment type="sequence caution" evidence="17">
    <conflict type="frameshift">
        <sequence resource="EMBL-CDS" id="AAG44660"/>
    </conflict>
</comment>
<comment type="sequence caution" evidence="17">
    <conflict type="erroneous initiation">
        <sequence resource="EMBL-CDS" id="BAB13431"/>
    </conflict>
</comment>
<protein>
    <recommendedName>
        <fullName evidence="17">Non-lysosomal glucosylceramidase</fullName>
        <shortName evidence="14">NLGase</shortName>
        <ecNumber evidence="4 10">3.2.1.45</ecNumber>
    </recommendedName>
    <alternativeName>
        <fullName>Beta-glucocerebrosidase 2</fullName>
        <shortName>Beta-glucosidase 2</shortName>
    </alternativeName>
    <alternativeName>
        <fullName evidence="15">Bile acid beta-glucosidase GBA2</fullName>
    </alternativeName>
    <alternativeName>
        <fullName evidence="22">Bile acid glucosyl transferase GBA2</fullName>
    </alternativeName>
    <alternativeName>
        <fullName evidence="1">Cholesterol glucosyltransferase GBA2</fullName>
        <ecNumber evidence="1">2.4.1.-</ecNumber>
    </alternativeName>
    <alternativeName>
        <fullName evidence="1">Cholesteryl-beta-glucosidase GBA2</fullName>
        <ecNumber evidence="1">3.2.1.-</ecNumber>
    </alternativeName>
    <alternativeName>
        <fullName>Glucosylceramidase 2</fullName>
    </alternativeName>
    <alternativeName>
        <fullName evidence="17">Non-lysosomal cholesterol glycosyltransferase</fullName>
    </alternativeName>
    <alternativeName>
        <fullName evidence="17">Non-lysosomal galactosylceramidase</fullName>
        <ecNumber evidence="11">3.2.1.46</ecNumber>
    </alternativeName>
    <alternativeName>
        <fullName evidence="17">Non-lysosomal glycosylceramidase</fullName>
    </alternativeName>
</protein>
<reference key="1">
    <citation type="journal article" date="2001" name="J. Biol. Chem.">
        <title>Molecular cloning and expression of human bile acid beta -glucosidase.</title>
        <authorList>
            <person name="Matern H."/>
            <person name="Boermans H."/>
            <person name="Lottspeich F."/>
            <person name="Matern S."/>
        </authorList>
    </citation>
    <scope>NUCLEOTIDE SEQUENCE [MRNA] (ISOFORM 1)</scope>
    <scope>PROTEIN SEQUENCE OF 39-46; 619-636 AND 919-927</scope>
    <scope>FUNCTION</scope>
    <scope>CATALYTIC ACTIVITY</scope>
    <scope>ACTIVITY REGULATION</scope>
    <scope>TOPOLOGY</scope>
    <scope>TISSUE SPECIFICITY</scope>
    <source>
        <tissue>Liver</tissue>
    </source>
</reference>
<reference key="2">
    <citation type="journal article" date="2000" name="DNA Res.">
        <title>Prediction of the coding sequences of unidentified human genes. XVIII. The complete sequences of 100 new cDNA clones from brain which code for large proteins in vitro.</title>
        <authorList>
            <person name="Nagase T."/>
            <person name="Kikuno R."/>
            <person name="Nakayama M."/>
            <person name="Hirosawa M."/>
            <person name="Ohara O."/>
        </authorList>
    </citation>
    <scope>NUCLEOTIDE SEQUENCE [LARGE SCALE MRNA] (ISOFORM 2)</scope>
    <source>
        <tissue>Brain</tissue>
    </source>
</reference>
<reference key="3">
    <citation type="journal article" date="2004" name="Nat. Genet.">
        <title>Complete sequencing and characterization of 21,243 full-length human cDNAs.</title>
        <authorList>
            <person name="Ota T."/>
            <person name="Suzuki Y."/>
            <person name="Nishikawa T."/>
            <person name="Otsuki T."/>
            <person name="Sugiyama T."/>
            <person name="Irie R."/>
            <person name="Wakamatsu A."/>
            <person name="Hayashi K."/>
            <person name="Sato H."/>
            <person name="Nagai K."/>
            <person name="Kimura K."/>
            <person name="Makita H."/>
            <person name="Sekine M."/>
            <person name="Obayashi M."/>
            <person name="Nishi T."/>
            <person name="Shibahara T."/>
            <person name="Tanaka T."/>
            <person name="Ishii S."/>
            <person name="Yamamoto J."/>
            <person name="Saito K."/>
            <person name="Kawai Y."/>
            <person name="Isono Y."/>
            <person name="Nakamura Y."/>
            <person name="Nagahari K."/>
            <person name="Murakami K."/>
            <person name="Yasuda T."/>
            <person name="Iwayanagi T."/>
            <person name="Wagatsuma M."/>
            <person name="Shiratori A."/>
            <person name="Sudo H."/>
            <person name="Hosoiri T."/>
            <person name="Kaku Y."/>
            <person name="Kodaira H."/>
            <person name="Kondo H."/>
            <person name="Sugawara M."/>
            <person name="Takahashi M."/>
            <person name="Kanda K."/>
            <person name="Yokoi T."/>
            <person name="Furuya T."/>
            <person name="Kikkawa E."/>
            <person name="Omura Y."/>
            <person name="Abe K."/>
            <person name="Kamihara K."/>
            <person name="Katsuta N."/>
            <person name="Sato K."/>
            <person name="Tanikawa M."/>
            <person name="Yamazaki M."/>
            <person name="Ninomiya K."/>
            <person name="Ishibashi T."/>
            <person name="Yamashita H."/>
            <person name="Murakawa K."/>
            <person name="Fujimori K."/>
            <person name="Tanai H."/>
            <person name="Kimata M."/>
            <person name="Watanabe M."/>
            <person name="Hiraoka S."/>
            <person name="Chiba Y."/>
            <person name="Ishida S."/>
            <person name="Ono Y."/>
            <person name="Takiguchi S."/>
            <person name="Watanabe S."/>
            <person name="Yosida M."/>
            <person name="Hotuta T."/>
            <person name="Kusano J."/>
            <person name="Kanehori K."/>
            <person name="Takahashi-Fujii A."/>
            <person name="Hara H."/>
            <person name="Tanase T.-O."/>
            <person name="Nomura Y."/>
            <person name="Togiya S."/>
            <person name="Komai F."/>
            <person name="Hara R."/>
            <person name="Takeuchi K."/>
            <person name="Arita M."/>
            <person name="Imose N."/>
            <person name="Musashino K."/>
            <person name="Yuuki H."/>
            <person name="Oshima A."/>
            <person name="Sasaki N."/>
            <person name="Aotsuka S."/>
            <person name="Yoshikawa Y."/>
            <person name="Matsunawa H."/>
            <person name="Ichihara T."/>
            <person name="Shiohata N."/>
            <person name="Sano S."/>
            <person name="Moriya S."/>
            <person name="Momiyama H."/>
            <person name="Satoh N."/>
            <person name="Takami S."/>
            <person name="Terashima Y."/>
            <person name="Suzuki O."/>
            <person name="Nakagawa S."/>
            <person name="Senoh A."/>
            <person name="Mizoguchi H."/>
            <person name="Goto Y."/>
            <person name="Shimizu F."/>
            <person name="Wakebe H."/>
            <person name="Hishigaki H."/>
            <person name="Watanabe T."/>
            <person name="Sugiyama A."/>
            <person name="Takemoto M."/>
            <person name="Kawakami B."/>
            <person name="Yamazaki M."/>
            <person name="Watanabe K."/>
            <person name="Kumagai A."/>
            <person name="Itakura S."/>
            <person name="Fukuzumi Y."/>
            <person name="Fujimori Y."/>
            <person name="Komiyama M."/>
            <person name="Tashiro H."/>
            <person name="Tanigami A."/>
            <person name="Fujiwara T."/>
            <person name="Ono T."/>
            <person name="Yamada K."/>
            <person name="Fujii Y."/>
            <person name="Ozaki K."/>
            <person name="Hirao M."/>
            <person name="Ohmori Y."/>
            <person name="Kawabata A."/>
            <person name="Hikiji T."/>
            <person name="Kobatake N."/>
            <person name="Inagaki H."/>
            <person name="Ikema Y."/>
            <person name="Okamoto S."/>
            <person name="Okitani R."/>
            <person name="Kawakami T."/>
            <person name="Noguchi S."/>
            <person name="Itoh T."/>
            <person name="Shigeta K."/>
            <person name="Senba T."/>
            <person name="Matsumura K."/>
            <person name="Nakajima Y."/>
            <person name="Mizuno T."/>
            <person name="Morinaga M."/>
            <person name="Sasaki M."/>
            <person name="Togashi T."/>
            <person name="Oyama M."/>
            <person name="Hata H."/>
            <person name="Watanabe M."/>
            <person name="Komatsu T."/>
            <person name="Mizushima-Sugano J."/>
            <person name="Satoh T."/>
            <person name="Shirai Y."/>
            <person name="Takahashi Y."/>
            <person name="Nakagawa K."/>
            <person name="Okumura K."/>
            <person name="Nagase T."/>
            <person name="Nomura N."/>
            <person name="Kikuchi H."/>
            <person name="Masuho Y."/>
            <person name="Yamashita R."/>
            <person name="Nakai K."/>
            <person name="Yada T."/>
            <person name="Nakamura Y."/>
            <person name="Ohara O."/>
            <person name="Isogai T."/>
            <person name="Sugano S."/>
        </authorList>
    </citation>
    <scope>NUCLEOTIDE SEQUENCE [LARGE SCALE MRNA] (ISOFORM 1)</scope>
    <source>
        <tissue>Kidney</tissue>
        <tissue>Trachea</tissue>
    </source>
</reference>
<reference key="4">
    <citation type="journal article" date="2007" name="BMC Genomics">
        <title>The full-ORF clone resource of the German cDNA consortium.</title>
        <authorList>
            <person name="Bechtel S."/>
            <person name="Rosenfelder H."/>
            <person name="Duda A."/>
            <person name="Schmidt C.P."/>
            <person name="Ernst U."/>
            <person name="Wellenreuther R."/>
            <person name="Mehrle A."/>
            <person name="Schuster C."/>
            <person name="Bahr A."/>
            <person name="Bloecker H."/>
            <person name="Heubner D."/>
            <person name="Hoerlein A."/>
            <person name="Michel G."/>
            <person name="Wedler H."/>
            <person name="Koehrer K."/>
            <person name="Ottenwaelder B."/>
            <person name="Poustka A."/>
            <person name="Wiemann S."/>
            <person name="Schupp I."/>
        </authorList>
    </citation>
    <scope>NUCLEOTIDE SEQUENCE [LARGE SCALE MRNA] (ISOFORM 1)</scope>
    <source>
        <tissue>Melanoma</tissue>
    </source>
</reference>
<reference key="5">
    <citation type="journal article" date="2004" name="Nature">
        <title>DNA sequence and analysis of human chromosome 9.</title>
        <authorList>
            <person name="Humphray S.J."/>
            <person name="Oliver K."/>
            <person name="Hunt A.R."/>
            <person name="Plumb R.W."/>
            <person name="Loveland J.E."/>
            <person name="Howe K.L."/>
            <person name="Andrews T.D."/>
            <person name="Searle S."/>
            <person name="Hunt S.E."/>
            <person name="Scott C.E."/>
            <person name="Jones M.C."/>
            <person name="Ainscough R."/>
            <person name="Almeida J.P."/>
            <person name="Ambrose K.D."/>
            <person name="Ashwell R.I.S."/>
            <person name="Babbage A.K."/>
            <person name="Babbage S."/>
            <person name="Bagguley C.L."/>
            <person name="Bailey J."/>
            <person name="Banerjee R."/>
            <person name="Barker D.J."/>
            <person name="Barlow K.F."/>
            <person name="Bates K."/>
            <person name="Beasley H."/>
            <person name="Beasley O."/>
            <person name="Bird C.P."/>
            <person name="Bray-Allen S."/>
            <person name="Brown A.J."/>
            <person name="Brown J.Y."/>
            <person name="Burford D."/>
            <person name="Burrill W."/>
            <person name="Burton J."/>
            <person name="Carder C."/>
            <person name="Carter N.P."/>
            <person name="Chapman J.C."/>
            <person name="Chen Y."/>
            <person name="Clarke G."/>
            <person name="Clark S.Y."/>
            <person name="Clee C.M."/>
            <person name="Clegg S."/>
            <person name="Collier R.E."/>
            <person name="Corby N."/>
            <person name="Crosier M."/>
            <person name="Cummings A.T."/>
            <person name="Davies J."/>
            <person name="Dhami P."/>
            <person name="Dunn M."/>
            <person name="Dutta I."/>
            <person name="Dyer L.W."/>
            <person name="Earthrowl M.E."/>
            <person name="Faulkner L."/>
            <person name="Fleming C.J."/>
            <person name="Frankish A."/>
            <person name="Frankland J.A."/>
            <person name="French L."/>
            <person name="Fricker D.G."/>
            <person name="Garner P."/>
            <person name="Garnett J."/>
            <person name="Ghori J."/>
            <person name="Gilbert J.G.R."/>
            <person name="Glison C."/>
            <person name="Grafham D.V."/>
            <person name="Gribble S."/>
            <person name="Griffiths C."/>
            <person name="Griffiths-Jones S."/>
            <person name="Grocock R."/>
            <person name="Guy J."/>
            <person name="Hall R.E."/>
            <person name="Hammond S."/>
            <person name="Harley J.L."/>
            <person name="Harrison E.S.I."/>
            <person name="Hart E.A."/>
            <person name="Heath P.D."/>
            <person name="Henderson C.D."/>
            <person name="Hopkins B.L."/>
            <person name="Howard P.J."/>
            <person name="Howden P.J."/>
            <person name="Huckle E."/>
            <person name="Johnson C."/>
            <person name="Johnson D."/>
            <person name="Joy A.A."/>
            <person name="Kay M."/>
            <person name="Keenan S."/>
            <person name="Kershaw J.K."/>
            <person name="Kimberley A.M."/>
            <person name="King A."/>
            <person name="Knights A."/>
            <person name="Laird G.K."/>
            <person name="Langford C."/>
            <person name="Lawlor S."/>
            <person name="Leongamornlert D.A."/>
            <person name="Leversha M."/>
            <person name="Lloyd C."/>
            <person name="Lloyd D.M."/>
            <person name="Lovell J."/>
            <person name="Martin S."/>
            <person name="Mashreghi-Mohammadi M."/>
            <person name="Matthews L."/>
            <person name="McLaren S."/>
            <person name="McLay K.E."/>
            <person name="McMurray A."/>
            <person name="Milne S."/>
            <person name="Nickerson T."/>
            <person name="Nisbett J."/>
            <person name="Nordsiek G."/>
            <person name="Pearce A.V."/>
            <person name="Peck A.I."/>
            <person name="Porter K.M."/>
            <person name="Pandian R."/>
            <person name="Pelan S."/>
            <person name="Phillimore B."/>
            <person name="Povey S."/>
            <person name="Ramsey Y."/>
            <person name="Rand V."/>
            <person name="Scharfe M."/>
            <person name="Sehra H.K."/>
            <person name="Shownkeen R."/>
            <person name="Sims S.K."/>
            <person name="Skuce C.D."/>
            <person name="Smith M."/>
            <person name="Steward C.A."/>
            <person name="Swarbreck D."/>
            <person name="Sycamore N."/>
            <person name="Tester J."/>
            <person name="Thorpe A."/>
            <person name="Tracey A."/>
            <person name="Tromans A."/>
            <person name="Thomas D.W."/>
            <person name="Wall M."/>
            <person name="Wallis J.M."/>
            <person name="West A.P."/>
            <person name="Whitehead S.L."/>
            <person name="Willey D.L."/>
            <person name="Williams S.A."/>
            <person name="Wilming L."/>
            <person name="Wray P.W."/>
            <person name="Young L."/>
            <person name="Ashurst J.L."/>
            <person name="Coulson A."/>
            <person name="Blocker H."/>
            <person name="Durbin R.M."/>
            <person name="Sulston J.E."/>
            <person name="Hubbard T."/>
            <person name="Jackson M.J."/>
            <person name="Bentley D.R."/>
            <person name="Beck S."/>
            <person name="Rogers J."/>
            <person name="Dunham I."/>
        </authorList>
    </citation>
    <scope>NUCLEOTIDE SEQUENCE [LARGE SCALE GENOMIC DNA]</scope>
</reference>
<reference key="6">
    <citation type="submission" date="2005-09" db="EMBL/GenBank/DDBJ databases">
        <authorList>
            <person name="Mural R.J."/>
            <person name="Istrail S."/>
            <person name="Sutton G.G."/>
            <person name="Florea L."/>
            <person name="Halpern A.L."/>
            <person name="Mobarry C.M."/>
            <person name="Lippert R."/>
            <person name="Walenz B."/>
            <person name="Shatkay H."/>
            <person name="Dew I."/>
            <person name="Miller J.R."/>
            <person name="Flanigan M.J."/>
            <person name="Edwards N.J."/>
            <person name="Bolanos R."/>
            <person name="Fasulo D."/>
            <person name="Halldorsson B.V."/>
            <person name="Hannenhalli S."/>
            <person name="Turner R."/>
            <person name="Yooseph S."/>
            <person name="Lu F."/>
            <person name="Nusskern D.R."/>
            <person name="Shue B.C."/>
            <person name="Zheng X.H."/>
            <person name="Zhong F."/>
            <person name="Delcher A.L."/>
            <person name="Huson D.H."/>
            <person name="Kravitz S.A."/>
            <person name="Mouchard L."/>
            <person name="Reinert K."/>
            <person name="Remington K.A."/>
            <person name="Clark A.G."/>
            <person name="Waterman M.S."/>
            <person name="Eichler E.E."/>
            <person name="Adams M.D."/>
            <person name="Hunkapiller M.W."/>
            <person name="Myers E.W."/>
            <person name="Venter J.C."/>
        </authorList>
    </citation>
    <scope>NUCLEOTIDE SEQUENCE [LARGE SCALE GENOMIC DNA]</scope>
</reference>
<reference key="7">
    <citation type="journal article" date="2004" name="Genome Res.">
        <title>The status, quality, and expansion of the NIH full-length cDNA project: the Mammalian Gene Collection (MGC).</title>
        <authorList>
            <consortium name="The MGC Project Team"/>
        </authorList>
    </citation>
    <scope>NUCLEOTIDE SEQUENCE [LARGE SCALE MRNA] (ISOFORM 1)</scope>
    <source>
        <tissue>Lymph</tissue>
    </source>
</reference>
<reference key="8">
    <citation type="submission" date="2000-05" db="EMBL/GenBank/DDBJ databases">
        <authorList>
            <person name="Xu X."/>
            <person name="Yang Y."/>
            <person name="Gao G."/>
            <person name="Xiao H."/>
            <person name="Chen Z."/>
            <person name="Han Z."/>
        </authorList>
    </citation>
    <scope>NUCLEOTIDE SEQUENCE [LARGE SCALE MRNA] OF 1-780 (ISOFORM 3)</scope>
    <source>
        <tissue>Adrenal gland</tissue>
    </source>
</reference>
<reference key="9">
    <citation type="journal article" date="1997" name="J. Biol. Chem.">
        <title>Purification and characterization of a microsomal bile acid beta-glucosidase from human liver.</title>
        <authorList>
            <person name="Matern H."/>
            <person name="Heinemann H."/>
            <person name="Legler G."/>
            <person name="Matern S."/>
        </authorList>
    </citation>
    <scope>FUNCTION</scope>
    <scope>CATALYTIC ACTIVITY</scope>
    <scope>BIOPHYSICOCHEMICAL PROPERTIES</scope>
</reference>
<reference key="10">
    <citation type="journal article" date="2006" name="J. Clin. Invest.">
        <title>Mutation of beta-glucosidase 2 causes glycolipid storage disease and impaired male fertility.</title>
        <authorList>
            <person name="Yildiz Y."/>
            <person name="Matern H."/>
            <person name="Thompson B."/>
            <person name="Allegood J.C."/>
            <person name="Warren R.L."/>
            <person name="Ramirez D.M.O."/>
            <person name="Hammer R.E."/>
            <person name="Hamra F.K."/>
            <person name="Matern S."/>
            <person name="Russell D.W."/>
        </authorList>
    </citation>
    <scope>FUNCTION</scope>
    <scope>CATALYTIC ACTIVITY</scope>
    <scope>PATHWAY</scope>
</reference>
<reference key="11">
    <citation type="journal article" date="2007" name="J. Biol. Chem.">
        <title>Identification of the non-lysosomal glucosylceramidase as beta-glucosidase 2.</title>
        <authorList>
            <person name="Boot R.G."/>
            <person name="Verhoek M."/>
            <person name="Donker-Koopman W."/>
            <person name="Strijland A."/>
            <person name="van Marle J."/>
            <person name="Overkleeft H.S."/>
            <person name="Wennekes T."/>
            <person name="Aerts J.M.F.G."/>
        </authorList>
    </citation>
    <scope>FUNCTION</scope>
    <scope>SUBCELLULAR LOCATION</scope>
    <scope>TOPOLOGY</scope>
</reference>
<reference key="12">
    <citation type="journal article" date="2020" name="J. Biol. Chem.">
        <title>Glucocerebrosidases catalyze a transgalactosylation reaction that yields a newly-identified brain sterol metabolite, galactosylated cholesterol.</title>
        <authorList>
            <person name="Akiyama H."/>
            <person name="Ide M."/>
            <person name="Nagatsuka Y."/>
            <person name="Sayano T."/>
            <person name="Nakanishi E."/>
            <person name="Uemura N."/>
            <person name="Yuyama K."/>
            <person name="Yamaguchi Y."/>
            <person name="Kamiguchi H."/>
            <person name="Takahashi R."/>
            <person name="Aerts J.M.F.G."/>
            <person name="Greimel P."/>
            <person name="Hirabayashi Y."/>
        </authorList>
    </citation>
    <scope>FUNCTION</scope>
    <scope>CATALYTIC ACTIVITY</scope>
    <scope>PATHWAY</scope>
</reference>
<reference key="13">
    <citation type="journal article" date="2013" name="Am. J. Hum. Genet.">
        <title>Loss of function of glucocerebrosidase GBA2 is responsible for motor neuron defects in hereditary spastic paraplegia.</title>
        <authorList>
            <person name="Martin E."/>
            <person name="Schuele R."/>
            <person name="Smets K."/>
            <person name="Rastetter A."/>
            <person name="Boukhris A."/>
            <person name="Loureiro J.L."/>
            <person name="Gonzalez M.A."/>
            <person name="Mundwiller E."/>
            <person name="Deconinck T."/>
            <person name="Wessner M."/>
            <person name="Jornea L."/>
            <person name="Oteyza A.C."/>
            <person name="Durr A."/>
            <person name="Martin J.J."/>
            <person name="Schoels L."/>
            <person name="Mhiri C."/>
            <person name="Lamari F."/>
            <person name="Zuechner S."/>
            <person name="De Jonghe P."/>
            <person name="Kabashi E."/>
            <person name="Brice A."/>
            <person name="Stevanin G."/>
        </authorList>
    </citation>
    <scope>VARIANTS SPG46 173-TRP--GLU-927 DEL; 234-ARG--GLU-927 DEL AND TRP-630</scope>
</reference>
<reference key="14">
    <citation type="journal article" date="2015" name="Biochem. Biophys. Res. Commun.">
        <title>Lack of enzyme activity in GBA2 mutants associated with hereditary spastic paraplegia/cerebellar ataxia (SPG46).</title>
        <authorList>
            <person name="Sultana S."/>
            <person name="Reichbauer J."/>
            <person name="Schuele R."/>
            <person name="Mochel F."/>
            <person name="Synofzik M."/>
            <person name="van der Spoel A.C."/>
        </authorList>
    </citation>
    <scope>CHARACTERIZATION OF VARIANTS SPG46 121-TYR--GLU-927 DEL; 173-TRP--GLU-927 DEL; 234-ARG--GLU-927 DEL; 340-ARG--GLU-927 DEL; TRP-630 AND HIS-873</scope>
    <scope>MUTAGENESIS OF PHE-419</scope>
</reference>
<reference key="15">
    <citation type="journal article" date="2013" name="Am. J. Hum. Genet.">
        <title>Mutations in GBA2 cause autosomal-recessive cerebellar ataxia with spasticity.</title>
        <authorList>
            <person name="Hammer M.B."/>
            <person name="Eleuch-Fayache G."/>
            <person name="Schottlaender L.V."/>
            <person name="Nehdi H."/>
            <person name="Gibbs J.R."/>
            <person name="Arepalli S.K."/>
            <person name="Chong S.B."/>
            <person name="Hernandez D.G."/>
            <person name="Sailer A."/>
            <person name="Liu G."/>
            <person name="Mistry P.K."/>
            <person name="Cai H."/>
            <person name="Shrader G."/>
            <person name="Sassi C."/>
            <person name="Bouhlal Y."/>
            <person name="Houlden H."/>
            <person name="Hentati F."/>
            <person name="Amouri R."/>
            <person name="Singleton A.B."/>
        </authorList>
    </citation>
    <scope>VARIANTS SPG46 121-TYR--GLU-927 DEL; 340-ARG--GLU-927 DEL AND HIS-873</scope>
</reference>
<reference key="16">
    <citation type="journal article" date="2014" name="Ann. Hum. Genet.">
        <title>A novel GBA2 gene missense mutation in spastic ataxia.</title>
        <authorList>
            <person name="Votsi C."/>
            <person name="Zamba-Papanicolaou E."/>
            <person name="Middleton L.T."/>
            <person name="Pantzaris M."/>
            <person name="Christodoulou K."/>
        </authorList>
    </citation>
    <scope>VARIANT SPG46 HIS-594</scope>
</reference>
<reference key="17">
    <citation type="journal article" date="2018" name="Int. J. Mol. Sci.">
        <title>Biochemical Characterization of the GBA2 c.1780G&gt;C Missense Mutation in Lymphoblastoid Cells from Patients with Spastic Ataxia.</title>
        <authorList>
            <person name="Malekkou A."/>
            <person name="Samarani M."/>
            <person name="Drousiotou A."/>
            <person name="Votsi C."/>
            <person name="Sonnino S."/>
            <person name="Pantzaris M."/>
            <person name="Chiricozzi E."/>
            <person name="Zamba-Papanicolaou E."/>
            <person name="Aureli M."/>
            <person name="Loberto N."/>
            <person name="Christodoulou K."/>
        </authorList>
    </citation>
    <scope>FUNCTION</scope>
    <scope>PATHWAY</scope>
    <scope>CHARACTERIZATION OF VARIANT SPG46 HIS-594</scope>
    <scope>ACTIVITY REGULATION</scope>
</reference>
<evidence type="ECO:0000250" key="1">
    <source>
        <dbReference type="UniProtKB" id="Q69ZF3"/>
    </source>
</evidence>
<evidence type="ECO:0000256" key="2">
    <source>
        <dbReference type="SAM" id="MobiDB-lite"/>
    </source>
</evidence>
<evidence type="ECO:0000269" key="3">
    <source>
    </source>
</evidence>
<evidence type="ECO:0000269" key="4">
    <source>
    </source>
</evidence>
<evidence type="ECO:0000269" key="5">
    <source>
    </source>
</evidence>
<evidence type="ECO:0000269" key="6">
    <source>
    </source>
</evidence>
<evidence type="ECO:0000269" key="7">
    <source>
    </source>
</evidence>
<evidence type="ECO:0000269" key="8">
    <source>
    </source>
</evidence>
<evidence type="ECO:0000269" key="9">
    <source>
    </source>
</evidence>
<evidence type="ECO:0000269" key="10">
    <source>
    </source>
</evidence>
<evidence type="ECO:0000269" key="11">
    <source>
    </source>
</evidence>
<evidence type="ECO:0000269" key="12">
    <source>
    </source>
</evidence>
<evidence type="ECO:0000303" key="13">
    <source>
    </source>
</evidence>
<evidence type="ECO:0000303" key="14">
    <source>
    </source>
</evidence>
<evidence type="ECO:0000303" key="15">
    <source>
    </source>
</evidence>
<evidence type="ECO:0000303" key="16">
    <source ref="8"/>
</evidence>
<evidence type="ECO:0000305" key="17"/>
<evidence type="ECO:0000305" key="18">
    <source>
    </source>
</evidence>
<evidence type="ECO:0000305" key="19">
    <source>
    </source>
</evidence>
<evidence type="ECO:0000305" key="20">
    <source>
    </source>
</evidence>
<evidence type="ECO:0000305" key="21">
    <source>
    </source>
</evidence>
<evidence type="ECO:0000305" key="22">
    <source>
    </source>
</evidence>
<evidence type="ECO:0000312" key="23">
    <source>
        <dbReference type="EMBL" id="BAB13431.1"/>
    </source>
</evidence>
<evidence type="ECO:0000312" key="24">
    <source>
        <dbReference type="HGNC" id="HGNC:18986"/>
    </source>
</evidence>
<keyword id="KW-0025">Alternative splicing</keyword>
<keyword id="KW-0153">Cholesterol metabolism</keyword>
<keyword id="KW-0903">Direct protein sequencing</keyword>
<keyword id="KW-0225">Disease variant</keyword>
<keyword id="KW-0256">Endoplasmic reticulum</keyword>
<keyword id="KW-0326">Glycosidase</keyword>
<keyword id="KW-0328">Glycosyltransferase</keyword>
<keyword id="KW-0333">Golgi apparatus</keyword>
<keyword id="KW-0890">Hereditary spastic paraplegia</keyword>
<keyword id="KW-0378">Hydrolase</keyword>
<keyword id="KW-0443">Lipid metabolism</keyword>
<keyword id="KW-0472">Membrane</keyword>
<keyword id="KW-0523">Neurodegeneration</keyword>
<keyword id="KW-1267">Proteomics identification</keyword>
<keyword id="KW-1185">Reference proteome</keyword>
<keyword id="KW-0746">Sphingolipid metabolism</keyword>
<keyword id="KW-0753">Steroid metabolism</keyword>
<keyword id="KW-1207">Sterol metabolism</keyword>
<keyword id="KW-0808">Transferase</keyword>
<name>GBA2_HUMAN</name>
<sequence>MGTQDPGNMGTGVPASEQISCAKEDPQVYCPEETGGTKDVQVTDCKSPEDSRPPKETDCCNPEDSGQLMVSYEGKAMGYQVPPFGWRICLAHEFTEKRKPFQANNVSLSNMIKHIGMGLRYLQWWYRKTHVEKKTPFIDMINSVPLRQIYGCPLGGIGGGTITRGWRGQFCRWQLNPGMYQHRTVIADQFTVCLRREGQTVYQQVLSLERPSVLRSWNWGLCGYFAFYHALYPRAWTVYQLPGQNVTLTCRQITPILPHDYQDSSLPVGVFVWDVENEGDEALDVSIMFSMRNGLGGGDDAPGGLWNEPFCLERSGETVRGLLLHHPTLPNPYTMAVAARVTAATTVTHITAFDPDSTGQQVWQDLLQDGQLDSPTGQSTPTQKGVGIAGAVCVSSKLRPRGQCRLEFSLAWDMPRIMFGAKGQVHYRRYTRFFGQDGDAAPALSHYALCRYAEWEERISAWQSPVLDDRSLPAWYKSALFNELYFLADGGTVWLEVLEDSLPEELGRNMCHLRPTLRDYGRFGYLEGQEYRMYNTYDVHFYASFALIMLWPKLELSLQYDMALATLREDLTRRRYLMSGVMAPVKRRNVIPHDIGDPDDEPWLRVNAYLIHDTADWKDLNLKFVLQVYRDYYLTGDQNFLKDMWPVCLAVMESEMKFDKDHDGLIENGGYADQTYDGWVTTGPSAYCGGLWLAAVAVMVQMAALCGAQDIQDKFSSILSRGQEAYERLLWNGRYYNYDSSSRPQSRSVMSDQCAGQWFLKACGLGEGDTEVFPTQHVVRALQTIFELNVQAFAGGAMGAVNGMQPHGVPDKSSVQSDEVWVGVVYGLAATMIQEGLTWEGFQTAEGCYRTVWERLGLAFQTPEAYCQQRVFRSLAYMRPLSIWAMQLALQQQQHKKASWPKVKQGTGLRTGPMFGPKEAMANLSPE</sequence>
<feature type="chain" id="PRO_0000283758" description="Non-lysosomal glucosylceramidase">
    <location>
        <begin position="1"/>
        <end position="927"/>
    </location>
</feature>
<feature type="region of interest" description="Disordered" evidence="2">
    <location>
        <begin position="32"/>
        <end position="62"/>
    </location>
</feature>
<feature type="compositionally biased region" description="Basic and acidic residues" evidence="2">
    <location>
        <begin position="46"/>
        <end position="58"/>
    </location>
</feature>
<feature type="splice variant" id="VSP_024383" description="In isoform 3." evidence="16">
    <location>
        <begin position="1"/>
        <end position="287"/>
    </location>
</feature>
<feature type="splice variant" id="VSP_024384" description="In isoform 2." evidence="13">
    <original>GLTWEGFQTAEGCYRTVWERLGLAFQTPEAYCQQRVFRSLAYMRPLSIWAMQLALQQQQHKKASWPKVKQGTGLRTGPMFGPKEAMANLSPE</original>
    <variation>LLPSGFCLWVIVISSTCWELLEGKDSTASIYPVEVALQRVPS</variation>
    <location>
        <begin position="836"/>
        <end position="927"/>
    </location>
</feature>
<feature type="sequence variant" id="VAR_081406" description="In SPG46; loss of glucosylceramide catabolic process." evidence="7 20">
    <location>
        <begin position="121"/>
        <end position="927"/>
    </location>
</feature>
<feature type="sequence variant" id="VAR_081407" description="In SPG46; loss of glucosylceramide catabolic process." evidence="6 20">
    <location>
        <begin position="173"/>
        <end position="927"/>
    </location>
</feature>
<feature type="sequence variant" id="VAR_081408" description="In SPG46; loss of glucosylceramide catabolic process." evidence="6 20">
    <location>
        <begin position="234"/>
        <end position="927"/>
    </location>
</feature>
<feature type="sequence variant" id="VAR_081409" description="In SPG46; loss of glucosylceramide catabolic process." evidence="7 20">
    <location>
        <begin position="340"/>
        <end position="927"/>
    </location>
</feature>
<feature type="sequence variant" id="VAR_081410" description="In SPG46; loss of glucosylceramide catabolic process; dbSNP:rs398123064." evidence="8">
    <original>D</original>
    <variation>H</variation>
    <location>
        <position position="594"/>
    </location>
</feature>
<feature type="sequence variant" id="VAR_069634" description="In SPG46; loss of glucosylceramide catabolic process; dbSNP:rs398123012." evidence="6 20">
    <original>R</original>
    <variation>W</variation>
    <location>
        <position position="630"/>
    </location>
</feature>
<feature type="sequence variant" id="VAR_069635" description="In SPG46; loss of glucosylceramide catabolic process; dbSNP:rs398123015." evidence="7 20">
    <original>R</original>
    <variation>H</variation>
    <location>
        <position position="873"/>
    </location>
</feature>
<feature type="mutagenesis site" description="Loss of glucosylceramide catabolic process." evidence="20">
    <original>F</original>
    <variation>V</variation>
    <location>
        <position position="419"/>
    </location>
</feature>
<feature type="sequence conflict" description="In Ref. 3; BAB55430." evidence="17" ref="3">
    <original>C</original>
    <variation>Y</variation>
    <location>
        <position position="60"/>
    </location>
</feature>
<feature type="sequence conflict" description="In Ref. 3; BAB55430." evidence="17" ref="3">
    <original>C</original>
    <variation>R</variation>
    <location>
        <position position="222"/>
    </location>
</feature>
<feature type="sequence conflict" description="In Ref. 3; BAB55430." evidence="17" ref="3">
    <original>N</original>
    <variation>K</variation>
    <location>
        <position position="482"/>
    </location>
</feature>
<gene>
    <name evidence="24" type="primary">GBA2</name>
    <name evidence="23" type="synonym">KIAA1605</name>
    <name evidence="24" type="synonym">SPG46</name>
    <name type="ORF">AD035</name>
</gene>
<accession>Q9HCG7</accession>
<accession>D3DRP2</accession>
<accession>Q5TCV6</accession>
<accession>Q96A51</accession>
<accession>Q96LY1</accession>
<accession>Q96SJ2</accession>
<accession>Q9H2L8</accession>
<dbReference type="EC" id="3.2.1.45" evidence="4 10"/>
<dbReference type="EC" id="2.4.1.-" evidence="1"/>
<dbReference type="EC" id="3.2.1.-" evidence="1"/>
<dbReference type="EC" id="3.2.1.46" evidence="11"/>
<dbReference type="EMBL" id="AJ309567">
    <property type="protein sequence ID" value="CAC83792.1"/>
    <property type="molecule type" value="mRNA"/>
</dbReference>
<dbReference type="EMBL" id="AB046825">
    <property type="protein sequence ID" value="BAB13431.1"/>
    <property type="status" value="ALT_INIT"/>
    <property type="molecule type" value="mRNA"/>
</dbReference>
<dbReference type="EMBL" id="AK027884">
    <property type="protein sequence ID" value="BAB55430.1"/>
    <property type="molecule type" value="mRNA"/>
</dbReference>
<dbReference type="EMBL" id="AL834306">
    <property type="protein sequence ID" value="CAD38976.1"/>
    <property type="molecule type" value="mRNA"/>
</dbReference>
<dbReference type="EMBL" id="AL133410">
    <property type="status" value="NOT_ANNOTATED_CDS"/>
    <property type="molecule type" value="Genomic_DNA"/>
</dbReference>
<dbReference type="EMBL" id="CH471071">
    <property type="protein sequence ID" value="EAW58348.1"/>
    <property type="molecule type" value="Genomic_DNA"/>
</dbReference>
<dbReference type="EMBL" id="CH471071">
    <property type="protein sequence ID" value="EAW58349.1"/>
    <property type="molecule type" value="Genomic_DNA"/>
</dbReference>
<dbReference type="EMBL" id="BC011363">
    <property type="protein sequence ID" value="AAH11363.1"/>
    <property type="molecule type" value="mRNA"/>
</dbReference>
<dbReference type="EMBL" id="AF258662">
    <property type="protein sequence ID" value="AAG44660.1"/>
    <property type="status" value="ALT_FRAME"/>
    <property type="molecule type" value="mRNA"/>
</dbReference>
<dbReference type="CCDS" id="CCDS6589.1">
    <molecule id="Q9HCG7-1"/>
</dbReference>
<dbReference type="CCDS" id="CCDS83363.1">
    <molecule id="Q9HCG7-2"/>
</dbReference>
<dbReference type="RefSeq" id="NP_001317589.1">
    <molecule id="Q9HCG7-2"/>
    <property type="nucleotide sequence ID" value="NM_001330660.2"/>
</dbReference>
<dbReference type="RefSeq" id="NP_065995.1">
    <molecule id="Q9HCG7-1"/>
    <property type="nucleotide sequence ID" value="NM_020944.3"/>
</dbReference>
<dbReference type="RefSeq" id="XP_016870435.1">
    <property type="nucleotide sequence ID" value="XM_017014946.1"/>
</dbReference>
<dbReference type="SMR" id="Q9HCG7"/>
<dbReference type="BioGRID" id="121728">
    <property type="interactions" value="32"/>
</dbReference>
<dbReference type="FunCoup" id="Q9HCG7">
    <property type="interactions" value="1207"/>
</dbReference>
<dbReference type="IntAct" id="Q9HCG7">
    <property type="interactions" value="16"/>
</dbReference>
<dbReference type="STRING" id="9606.ENSP00000367343"/>
<dbReference type="BindingDB" id="Q9HCG7"/>
<dbReference type="ChEMBL" id="CHEMBL3761"/>
<dbReference type="DrugCentral" id="Q9HCG7"/>
<dbReference type="SwissLipids" id="SLP:000001382"/>
<dbReference type="SwissLipids" id="SLP:000001932">
    <molecule id="Q9HCG7-1"/>
</dbReference>
<dbReference type="CAZy" id="GH116">
    <property type="family name" value="Glycoside Hydrolase Family 116"/>
</dbReference>
<dbReference type="iPTMnet" id="Q9HCG7"/>
<dbReference type="PhosphoSitePlus" id="Q9HCG7"/>
<dbReference type="SwissPalm" id="Q9HCG7"/>
<dbReference type="BioMuta" id="GBA2"/>
<dbReference type="DMDM" id="143018392"/>
<dbReference type="jPOST" id="Q9HCG7"/>
<dbReference type="MassIVE" id="Q9HCG7"/>
<dbReference type="PaxDb" id="9606-ENSP00000367343"/>
<dbReference type="PeptideAtlas" id="Q9HCG7"/>
<dbReference type="ProteomicsDB" id="81709">
    <molecule id="Q9HCG7-1"/>
</dbReference>
<dbReference type="ProteomicsDB" id="81710">
    <molecule id="Q9HCG7-2"/>
</dbReference>
<dbReference type="ProteomicsDB" id="81711">
    <molecule id="Q9HCG7-3"/>
</dbReference>
<dbReference type="Antibodypedia" id="11711">
    <property type="antibodies" value="107 antibodies from 18 providers"/>
</dbReference>
<dbReference type="DNASU" id="57704"/>
<dbReference type="Ensembl" id="ENST00000378094.4">
    <molecule id="Q9HCG7-2"/>
    <property type="protein sequence ID" value="ENSP00000367334.4"/>
    <property type="gene ID" value="ENSG00000070610.14"/>
</dbReference>
<dbReference type="Ensembl" id="ENST00000378103.7">
    <molecule id="Q9HCG7-1"/>
    <property type="protein sequence ID" value="ENSP00000367343.3"/>
    <property type="gene ID" value="ENSG00000070610.14"/>
</dbReference>
<dbReference type="GeneID" id="57704"/>
<dbReference type="KEGG" id="hsa:57704"/>
<dbReference type="MANE-Select" id="ENST00000378103.7">
    <property type="protein sequence ID" value="ENSP00000367343.3"/>
    <property type="RefSeq nucleotide sequence ID" value="NM_020944.3"/>
    <property type="RefSeq protein sequence ID" value="NP_065995.1"/>
</dbReference>
<dbReference type="UCSC" id="uc003zxw.3">
    <molecule id="Q9HCG7-1"/>
    <property type="organism name" value="human"/>
</dbReference>
<dbReference type="AGR" id="HGNC:18986"/>
<dbReference type="CTD" id="57704"/>
<dbReference type="DisGeNET" id="57704"/>
<dbReference type="GeneCards" id="GBA2"/>
<dbReference type="HGNC" id="HGNC:18986">
    <property type="gene designation" value="GBA2"/>
</dbReference>
<dbReference type="HPA" id="ENSG00000070610">
    <property type="expression patterns" value="Low tissue specificity"/>
</dbReference>
<dbReference type="MalaCards" id="GBA2"/>
<dbReference type="MIM" id="609471">
    <property type="type" value="gene"/>
</dbReference>
<dbReference type="MIM" id="614409">
    <property type="type" value="phenotype"/>
</dbReference>
<dbReference type="neXtProt" id="NX_Q9HCG7"/>
<dbReference type="OpenTargets" id="ENSG00000070610"/>
<dbReference type="Orphanet" id="352641">
    <property type="disease" value="Autosomal recessive cerebellar ataxia with late-onset spasticity"/>
</dbReference>
<dbReference type="Orphanet" id="320391">
    <property type="disease" value="Autosomal recessive spastic paraplegia type 46"/>
</dbReference>
<dbReference type="PharmGKB" id="PA38773"/>
<dbReference type="VEuPathDB" id="HostDB:ENSG00000070610"/>
<dbReference type="eggNOG" id="KOG2119">
    <property type="taxonomic scope" value="Eukaryota"/>
</dbReference>
<dbReference type="GeneTree" id="ENSGT00390000010998"/>
<dbReference type="HOGENOM" id="CLU_006322_1_1_1"/>
<dbReference type="InParanoid" id="Q9HCG7"/>
<dbReference type="OMA" id="HDLGAPN"/>
<dbReference type="OrthoDB" id="730489at2759"/>
<dbReference type="PAN-GO" id="Q9HCG7">
    <property type="GO annotations" value="2 GO annotations based on evolutionary models"/>
</dbReference>
<dbReference type="PhylomeDB" id="Q9HCG7"/>
<dbReference type="TreeFam" id="TF313888"/>
<dbReference type="BRENDA" id="3.2.1.45">
    <property type="organism ID" value="2681"/>
</dbReference>
<dbReference type="PathwayCommons" id="Q9HCG7"/>
<dbReference type="Reactome" id="R-HSA-9840310">
    <property type="pathway name" value="Glycosphingolipid catabolism"/>
</dbReference>
<dbReference type="SABIO-RK" id="Q9HCG7"/>
<dbReference type="SignaLink" id="Q9HCG7"/>
<dbReference type="UniPathway" id="UPA00222"/>
<dbReference type="UniPathway" id="UPA00296"/>
<dbReference type="BioGRID-ORCS" id="57704">
    <property type="hits" value="11 hits in 1158 CRISPR screens"/>
</dbReference>
<dbReference type="ChiTaRS" id="GBA2">
    <property type="organism name" value="human"/>
</dbReference>
<dbReference type="GeneWiki" id="GBA2"/>
<dbReference type="GenomeRNAi" id="57704"/>
<dbReference type="Pharos" id="Q9HCG7">
    <property type="development level" value="Tchem"/>
</dbReference>
<dbReference type="PRO" id="PR:Q9HCG7"/>
<dbReference type="Proteomes" id="UP000005640">
    <property type="component" value="Chromosome 9"/>
</dbReference>
<dbReference type="RNAct" id="Q9HCG7">
    <property type="molecule type" value="protein"/>
</dbReference>
<dbReference type="Bgee" id="ENSG00000070610">
    <property type="expression patterns" value="Expressed in metanephros cortex and 175 other cell types or tissues"/>
</dbReference>
<dbReference type="ExpressionAtlas" id="Q9HCG7">
    <property type="expression patterns" value="baseline and differential"/>
</dbReference>
<dbReference type="GO" id="GO:0005829">
    <property type="term" value="C:cytosol"/>
    <property type="evidence" value="ECO:0000250"/>
    <property type="project" value="UniProtKB"/>
</dbReference>
<dbReference type="GO" id="GO:0005789">
    <property type="term" value="C:endoplasmic reticulum membrane"/>
    <property type="evidence" value="ECO:0000250"/>
    <property type="project" value="UniProtKB"/>
</dbReference>
<dbReference type="GO" id="GO:0000139">
    <property type="term" value="C:Golgi membrane"/>
    <property type="evidence" value="ECO:0000250"/>
    <property type="project" value="UniProtKB"/>
</dbReference>
<dbReference type="GO" id="GO:0016020">
    <property type="term" value="C:membrane"/>
    <property type="evidence" value="ECO:0000314"/>
    <property type="project" value="UniProtKB"/>
</dbReference>
<dbReference type="GO" id="GO:0005886">
    <property type="term" value="C:plasma membrane"/>
    <property type="evidence" value="ECO:0000304"/>
    <property type="project" value="Reactome"/>
</dbReference>
<dbReference type="GO" id="GO:0005790">
    <property type="term" value="C:smooth endoplasmic reticulum"/>
    <property type="evidence" value="ECO:0000304"/>
    <property type="project" value="UniProtKB"/>
</dbReference>
<dbReference type="GO" id="GO:0008422">
    <property type="term" value="F:beta-glucosidase activity"/>
    <property type="evidence" value="ECO:0000314"/>
    <property type="project" value="UniProtKB"/>
</dbReference>
<dbReference type="GO" id="GO:0004336">
    <property type="term" value="F:galactosylceramidase activity"/>
    <property type="evidence" value="ECO:0007669"/>
    <property type="project" value="RHEA"/>
</dbReference>
<dbReference type="GO" id="GO:0004348">
    <property type="term" value="F:glucosylceramidase activity"/>
    <property type="evidence" value="ECO:0000314"/>
    <property type="project" value="UniProtKB"/>
</dbReference>
<dbReference type="GO" id="GO:0046527">
    <property type="term" value="F:glucosyltransferase activity"/>
    <property type="evidence" value="ECO:0000250"/>
    <property type="project" value="UniProtKB"/>
</dbReference>
<dbReference type="GO" id="GO:0050295">
    <property type="term" value="F:steryl-beta-glucosidase activity"/>
    <property type="evidence" value="ECO:0000250"/>
    <property type="project" value="UniProtKB"/>
</dbReference>
<dbReference type="GO" id="GO:0008206">
    <property type="term" value="P:bile acid metabolic process"/>
    <property type="evidence" value="ECO:0000314"/>
    <property type="project" value="UniProtKB"/>
</dbReference>
<dbReference type="GO" id="GO:0005975">
    <property type="term" value="P:carbohydrate metabolic process"/>
    <property type="evidence" value="ECO:0007669"/>
    <property type="project" value="InterPro"/>
</dbReference>
<dbReference type="GO" id="GO:0007417">
    <property type="term" value="P:central nervous system development"/>
    <property type="evidence" value="ECO:0000318"/>
    <property type="project" value="GO_Central"/>
</dbReference>
<dbReference type="GO" id="GO:0021954">
    <property type="term" value="P:central nervous system neuron development"/>
    <property type="evidence" value="ECO:0000315"/>
    <property type="project" value="UniProtKB"/>
</dbReference>
<dbReference type="GO" id="GO:0008203">
    <property type="term" value="P:cholesterol metabolic process"/>
    <property type="evidence" value="ECO:0000250"/>
    <property type="project" value="UniProtKB"/>
</dbReference>
<dbReference type="GO" id="GO:0006680">
    <property type="term" value="P:glucosylceramide catabolic process"/>
    <property type="evidence" value="ECO:0000314"/>
    <property type="project" value="UniProtKB"/>
</dbReference>
<dbReference type="GO" id="GO:0016139">
    <property type="term" value="P:glycoside catabolic process"/>
    <property type="evidence" value="ECO:0000314"/>
    <property type="project" value="UniProtKB"/>
</dbReference>
<dbReference type="GO" id="GO:0046479">
    <property type="term" value="P:glycosphingolipid catabolic process"/>
    <property type="evidence" value="ECO:0000304"/>
    <property type="project" value="Reactome"/>
</dbReference>
<dbReference type="GO" id="GO:0030259">
    <property type="term" value="P:lipid glycosylation"/>
    <property type="evidence" value="ECO:0000250"/>
    <property type="project" value="UniProtKB"/>
</dbReference>
<dbReference type="GO" id="GO:0030833">
    <property type="term" value="P:regulation of actin filament polymerization"/>
    <property type="evidence" value="ECO:0000250"/>
    <property type="project" value="UniProtKB"/>
</dbReference>
<dbReference type="GO" id="GO:0097035">
    <property type="term" value="P:regulation of membrane lipid distribution"/>
    <property type="evidence" value="ECO:0000250"/>
    <property type="project" value="UniProtKB"/>
</dbReference>
<dbReference type="GO" id="GO:0031113">
    <property type="term" value="P:regulation of microtubule polymerization"/>
    <property type="evidence" value="ECO:0000250"/>
    <property type="project" value="UniProtKB"/>
</dbReference>
<dbReference type="FunFam" id="1.50.10.10:FF:000013">
    <property type="entry name" value="Non-lysosomal glucosylceramidase"/>
    <property type="match status" value="1"/>
</dbReference>
<dbReference type="Gene3D" id="1.50.10.10">
    <property type="match status" value="1"/>
</dbReference>
<dbReference type="InterPro" id="IPR008928">
    <property type="entry name" value="6-hairpin_glycosidase_sf"/>
</dbReference>
<dbReference type="InterPro" id="IPR012341">
    <property type="entry name" value="6hp_glycosidase-like_sf"/>
</dbReference>
<dbReference type="InterPro" id="IPR014551">
    <property type="entry name" value="B_Glucosidase_GBA2-typ"/>
</dbReference>
<dbReference type="InterPro" id="IPR006775">
    <property type="entry name" value="GH116_catalytic"/>
</dbReference>
<dbReference type="InterPro" id="IPR024462">
    <property type="entry name" value="GH116_N"/>
</dbReference>
<dbReference type="InterPro" id="IPR052566">
    <property type="entry name" value="Non-lysos_glucosylceramidase"/>
</dbReference>
<dbReference type="PANTHER" id="PTHR12654">
    <property type="entry name" value="BILE ACID BETA-GLUCOSIDASE-RELATED"/>
    <property type="match status" value="1"/>
</dbReference>
<dbReference type="PANTHER" id="PTHR12654:SF0">
    <property type="entry name" value="NON-LYSOSOMAL GLUCOSYLCERAMIDASE"/>
    <property type="match status" value="1"/>
</dbReference>
<dbReference type="Pfam" id="PF04685">
    <property type="entry name" value="DUF608"/>
    <property type="match status" value="1"/>
</dbReference>
<dbReference type="Pfam" id="PF12215">
    <property type="entry name" value="Glyco_hydr_116N"/>
    <property type="match status" value="1"/>
</dbReference>
<dbReference type="PIRSF" id="PIRSF028944">
    <property type="entry name" value="Beta_gluc_GBA2"/>
    <property type="match status" value="1"/>
</dbReference>
<dbReference type="SUPFAM" id="SSF48208">
    <property type="entry name" value="Six-hairpin glycosidases"/>
    <property type="match status" value="1"/>
</dbReference>